<sequence>MLNSFKLSLQYILPKLWLTRLAGWGASKRAGWLTKLVIDLFVKYYKVDMKEAQKPDTASYRTFNEFFVRPLRDEVRPIDTDPNVLVMPADGVISQLGKIEEDKILQAKGHNYSLEALLAGNYLMADLFRNGTFVTTYLSPRDYHRVHMPCNGILREMIYVPGDLFSVNHLTAQNVPNLFARNERVICLFDTEFGPMAQILVGATIVGSIETVWAGTITPPREGIIKRWTWPAGENDGSVALLKGQEMGRFKLGSTVINLFAPGKVNLVEQLESLSVTKIGQPLAVSTETFVTPDSEPAPLPAEEIEAEHDASPLVDDKKDQV</sequence>
<comment type="function">
    <text evidence="1">Catalyzes the formation of phosphatidylethanolamine (PtdEtn) from phosphatidylserine (PtdSer).</text>
</comment>
<comment type="catalytic activity">
    <reaction evidence="1">
        <text>a 1,2-diacyl-sn-glycero-3-phospho-L-serine + H(+) = a 1,2-diacyl-sn-glycero-3-phosphoethanolamine + CO2</text>
        <dbReference type="Rhea" id="RHEA:20828"/>
        <dbReference type="ChEBI" id="CHEBI:15378"/>
        <dbReference type="ChEBI" id="CHEBI:16526"/>
        <dbReference type="ChEBI" id="CHEBI:57262"/>
        <dbReference type="ChEBI" id="CHEBI:64612"/>
        <dbReference type="EC" id="4.1.1.65"/>
    </reaction>
</comment>
<comment type="cofactor">
    <cofactor evidence="1">
        <name>pyruvate</name>
        <dbReference type="ChEBI" id="CHEBI:15361"/>
    </cofactor>
    <text evidence="1">Binds 1 pyruvoyl group covalently per subunit.</text>
</comment>
<comment type="pathway">
    <text evidence="1">Phospholipid metabolism; phosphatidylethanolamine biosynthesis; phosphatidylethanolamine from CDP-diacylglycerol: step 2/2.</text>
</comment>
<comment type="subunit">
    <text evidence="1">Heterodimer of a large membrane-associated beta subunit and a small pyruvoyl-containing alpha subunit.</text>
</comment>
<comment type="subcellular location">
    <subcellularLocation>
        <location evidence="1">Cell membrane</location>
        <topology evidence="1">Peripheral membrane protein</topology>
    </subcellularLocation>
</comment>
<comment type="PTM">
    <text evidence="1">Is synthesized initially as an inactive proenzyme. Formation of the active enzyme involves a self-maturation process in which the active site pyruvoyl group is generated from an internal serine residue via an autocatalytic post-translational modification. Two non-identical subunits are generated from the proenzyme in this reaction, and the pyruvate is formed at the N-terminus of the alpha chain, which is derived from the carboxyl end of the proenzyme. The autoendoproteolytic cleavage occurs by a canonical serine protease mechanism, in which the side chain hydroxyl group of the serine supplies its oxygen atom to form the C-terminus of the beta chain, while the remainder of the serine residue undergoes an oxidative deamination to produce ammonia and the pyruvoyl prosthetic group on the alpha chain. During this reaction, the Ser that is part of the protease active site of the proenzyme becomes the pyruvoyl prosthetic group, which constitutes an essential element of the active site of the mature decarboxylase.</text>
</comment>
<comment type="similarity">
    <text evidence="1">Belongs to the phosphatidylserine decarboxylase family. PSD-B subfamily. Prokaryotic type I sub-subfamily.</text>
</comment>
<reference key="1">
    <citation type="journal article" date="2009" name="PLoS Genet.">
        <title>Organised genome dynamics in the Escherichia coli species results in highly diverse adaptive paths.</title>
        <authorList>
            <person name="Touchon M."/>
            <person name="Hoede C."/>
            <person name="Tenaillon O."/>
            <person name="Barbe V."/>
            <person name="Baeriswyl S."/>
            <person name="Bidet P."/>
            <person name="Bingen E."/>
            <person name="Bonacorsi S."/>
            <person name="Bouchier C."/>
            <person name="Bouvet O."/>
            <person name="Calteau A."/>
            <person name="Chiapello H."/>
            <person name="Clermont O."/>
            <person name="Cruveiller S."/>
            <person name="Danchin A."/>
            <person name="Diard M."/>
            <person name="Dossat C."/>
            <person name="Karoui M.E."/>
            <person name="Frapy E."/>
            <person name="Garry L."/>
            <person name="Ghigo J.M."/>
            <person name="Gilles A.M."/>
            <person name="Johnson J."/>
            <person name="Le Bouguenec C."/>
            <person name="Lescat M."/>
            <person name="Mangenot S."/>
            <person name="Martinez-Jehanne V."/>
            <person name="Matic I."/>
            <person name="Nassif X."/>
            <person name="Oztas S."/>
            <person name="Petit M.A."/>
            <person name="Pichon C."/>
            <person name="Rouy Z."/>
            <person name="Ruf C.S."/>
            <person name="Schneider D."/>
            <person name="Tourret J."/>
            <person name="Vacherie B."/>
            <person name="Vallenet D."/>
            <person name="Medigue C."/>
            <person name="Rocha E.P.C."/>
            <person name="Denamur E."/>
        </authorList>
    </citation>
    <scope>NUCLEOTIDE SEQUENCE [LARGE SCALE GENOMIC DNA]</scope>
    <source>
        <strain>ATCC 35469 / DSM 13698 / BCRC 15582 / CCUG 18766 / IAM 14443 / JCM 21226 / LMG 7866 / NBRC 102419 / NCTC 12128 / CDC 0568-73</strain>
    </source>
</reference>
<dbReference type="EC" id="4.1.1.65" evidence="1"/>
<dbReference type="EMBL" id="CU928158">
    <property type="protein sequence ID" value="CAQ91634.1"/>
    <property type="molecule type" value="Genomic_DNA"/>
</dbReference>
<dbReference type="SMR" id="B7LLU4"/>
<dbReference type="KEGG" id="efe:EFER_4214"/>
<dbReference type="HOGENOM" id="CLU_029061_4_1_6"/>
<dbReference type="OrthoDB" id="9802030at2"/>
<dbReference type="UniPathway" id="UPA00558">
    <property type="reaction ID" value="UER00616"/>
</dbReference>
<dbReference type="Proteomes" id="UP000000745">
    <property type="component" value="Chromosome"/>
</dbReference>
<dbReference type="GO" id="GO:0005886">
    <property type="term" value="C:plasma membrane"/>
    <property type="evidence" value="ECO:0007669"/>
    <property type="project" value="UniProtKB-SubCell"/>
</dbReference>
<dbReference type="GO" id="GO:0004609">
    <property type="term" value="F:phosphatidylserine decarboxylase activity"/>
    <property type="evidence" value="ECO:0007669"/>
    <property type="project" value="UniProtKB-UniRule"/>
</dbReference>
<dbReference type="GO" id="GO:0006646">
    <property type="term" value="P:phosphatidylethanolamine biosynthetic process"/>
    <property type="evidence" value="ECO:0007669"/>
    <property type="project" value="UniProtKB-UniRule"/>
</dbReference>
<dbReference type="HAMAP" id="MF_00662">
    <property type="entry name" value="PS_decarb_PSD_B_type1"/>
    <property type="match status" value="1"/>
</dbReference>
<dbReference type="InterPro" id="IPR003817">
    <property type="entry name" value="PS_Dcarbxylase"/>
</dbReference>
<dbReference type="InterPro" id="IPR033177">
    <property type="entry name" value="PSD-B"/>
</dbReference>
<dbReference type="InterPro" id="IPR033178">
    <property type="entry name" value="PSD_type1_pro"/>
</dbReference>
<dbReference type="NCBIfam" id="TIGR00163">
    <property type="entry name" value="PS_decarb"/>
    <property type="match status" value="1"/>
</dbReference>
<dbReference type="PANTHER" id="PTHR10067">
    <property type="entry name" value="PHOSPHATIDYLSERINE DECARBOXYLASE"/>
    <property type="match status" value="1"/>
</dbReference>
<dbReference type="PANTHER" id="PTHR10067:SF6">
    <property type="entry name" value="PHOSPHATIDYLSERINE DECARBOXYLASE PROENZYME, MITOCHONDRIAL"/>
    <property type="match status" value="1"/>
</dbReference>
<dbReference type="Pfam" id="PF02666">
    <property type="entry name" value="PS_Dcarbxylase"/>
    <property type="match status" value="1"/>
</dbReference>
<feature type="chain" id="PRO_1000131376" description="Phosphatidylserine decarboxylase beta chain" evidence="1">
    <location>
        <begin position="1"/>
        <end position="253"/>
    </location>
</feature>
<feature type="chain" id="PRO_1000131377" description="Phosphatidylserine decarboxylase alpha chain" evidence="1">
    <location>
        <begin position="254"/>
        <end position="322"/>
    </location>
</feature>
<feature type="region of interest" description="Disordered" evidence="2">
    <location>
        <begin position="290"/>
        <end position="322"/>
    </location>
</feature>
<feature type="compositionally biased region" description="Basic and acidic residues" evidence="2">
    <location>
        <begin position="308"/>
        <end position="322"/>
    </location>
</feature>
<feature type="active site" description="Charge relay system; for autoendoproteolytic cleavage activity" evidence="1">
    <location>
        <position position="90"/>
    </location>
</feature>
<feature type="active site" description="Charge relay system; for autoendoproteolytic cleavage activity" evidence="1">
    <location>
        <position position="147"/>
    </location>
</feature>
<feature type="active site" description="Charge relay system; for autoendoproteolytic cleavage activity" evidence="1">
    <location>
        <position position="254"/>
    </location>
</feature>
<feature type="active site" description="Schiff-base intermediate with substrate; via pyruvic acid; for decarboxylase activity" evidence="1">
    <location>
        <position position="254"/>
    </location>
</feature>
<feature type="site" description="Cleavage (non-hydrolytic); by autocatalysis" evidence="1">
    <location>
        <begin position="253"/>
        <end position="254"/>
    </location>
</feature>
<feature type="modified residue" description="Pyruvic acid (Ser); by autocatalysis" evidence="1">
    <location>
        <position position="254"/>
    </location>
</feature>
<evidence type="ECO:0000255" key="1">
    <source>
        <dbReference type="HAMAP-Rule" id="MF_00662"/>
    </source>
</evidence>
<evidence type="ECO:0000256" key="2">
    <source>
        <dbReference type="SAM" id="MobiDB-lite"/>
    </source>
</evidence>
<keyword id="KW-1003">Cell membrane</keyword>
<keyword id="KW-0210">Decarboxylase</keyword>
<keyword id="KW-0444">Lipid biosynthesis</keyword>
<keyword id="KW-0443">Lipid metabolism</keyword>
<keyword id="KW-0456">Lyase</keyword>
<keyword id="KW-0472">Membrane</keyword>
<keyword id="KW-0594">Phospholipid biosynthesis</keyword>
<keyword id="KW-1208">Phospholipid metabolism</keyword>
<keyword id="KW-0670">Pyruvate</keyword>
<keyword id="KW-0865">Zymogen</keyword>
<gene>
    <name evidence="1" type="primary">psd</name>
    <name type="ordered locus">EFER_4214</name>
</gene>
<organism>
    <name type="scientific">Escherichia fergusonii (strain ATCC 35469 / DSM 13698 / CCUG 18766 / IAM 14443 / JCM 21226 / LMG 7866 / NBRC 102419 / NCTC 12128 / CDC 0568-73)</name>
    <dbReference type="NCBI Taxonomy" id="585054"/>
    <lineage>
        <taxon>Bacteria</taxon>
        <taxon>Pseudomonadati</taxon>
        <taxon>Pseudomonadota</taxon>
        <taxon>Gammaproteobacteria</taxon>
        <taxon>Enterobacterales</taxon>
        <taxon>Enterobacteriaceae</taxon>
        <taxon>Escherichia</taxon>
    </lineage>
</organism>
<accession>B7LLU4</accession>
<proteinExistence type="inferred from homology"/>
<protein>
    <recommendedName>
        <fullName evidence="1">Phosphatidylserine decarboxylase proenzyme</fullName>
        <ecNumber evidence="1">4.1.1.65</ecNumber>
    </recommendedName>
    <component>
        <recommendedName>
            <fullName evidence="1">Phosphatidylserine decarboxylase alpha chain</fullName>
        </recommendedName>
    </component>
    <component>
        <recommendedName>
            <fullName evidence="1">Phosphatidylserine decarboxylase beta chain</fullName>
        </recommendedName>
    </component>
</protein>
<name>PSD_ESCF3</name>